<sequence length="121" mass="12979">MKEGIHPDYKATKVLCACGNVIETRSVRGDFHIEICSNCHPFFTGKQKIMDTAGRIERFKTRYAATPAKAEPAKKAPAAEPAKKVEAAKENRAAKRAKAGKSKKSEAAPAAEAPAADAKPE</sequence>
<gene>
    <name evidence="1" type="primary">rpmE</name>
    <name type="ordered locus">Adeh_0689</name>
</gene>
<reference key="1">
    <citation type="submission" date="2006-01" db="EMBL/GenBank/DDBJ databases">
        <title>Complete sequence of Anaeromyxobacter dehalogenans 2CP-C.</title>
        <authorList>
            <person name="Copeland A."/>
            <person name="Lucas S."/>
            <person name="Lapidus A."/>
            <person name="Barry K."/>
            <person name="Detter J.C."/>
            <person name="Glavina T."/>
            <person name="Hammon N."/>
            <person name="Israni S."/>
            <person name="Pitluck S."/>
            <person name="Brettin T."/>
            <person name="Bruce D."/>
            <person name="Han C."/>
            <person name="Tapia R."/>
            <person name="Gilna P."/>
            <person name="Kiss H."/>
            <person name="Schmutz J."/>
            <person name="Larimer F."/>
            <person name="Land M."/>
            <person name="Kyrpides N."/>
            <person name="Anderson I."/>
            <person name="Sanford R.A."/>
            <person name="Ritalahti K.M."/>
            <person name="Thomas H.S."/>
            <person name="Kirby J.R."/>
            <person name="Zhulin I.B."/>
            <person name="Loeffler F.E."/>
            <person name="Richardson P."/>
        </authorList>
    </citation>
    <scope>NUCLEOTIDE SEQUENCE [LARGE SCALE GENOMIC DNA]</scope>
    <source>
        <strain>2CP-C</strain>
    </source>
</reference>
<dbReference type="EMBL" id="CP000251">
    <property type="protein sequence ID" value="ABC80465.1"/>
    <property type="molecule type" value="Genomic_DNA"/>
</dbReference>
<dbReference type="RefSeq" id="WP_011419748.1">
    <property type="nucleotide sequence ID" value="NC_007760.1"/>
</dbReference>
<dbReference type="STRING" id="290397.Adeh_0689"/>
<dbReference type="KEGG" id="ade:Adeh_0689"/>
<dbReference type="eggNOG" id="COG0254">
    <property type="taxonomic scope" value="Bacteria"/>
</dbReference>
<dbReference type="HOGENOM" id="CLU_114306_1_0_7"/>
<dbReference type="OrthoDB" id="9803251at2"/>
<dbReference type="Proteomes" id="UP000001935">
    <property type="component" value="Chromosome"/>
</dbReference>
<dbReference type="GO" id="GO:1990904">
    <property type="term" value="C:ribonucleoprotein complex"/>
    <property type="evidence" value="ECO:0007669"/>
    <property type="project" value="UniProtKB-KW"/>
</dbReference>
<dbReference type="GO" id="GO:0005840">
    <property type="term" value="C:ribosome"/>
    <property type="evidence" value="ECO:0007669"/>
    <property type="project" value="UniProtKB-KW"/>
</dbReference>
<dbReference type="GO" id="GO:0046872">
    <property type="term" value="F:metal ion binding"/>
    <property type="evidence" value="ECO:0007669"/>
    <property type="project" value="UniProtKB-KW"/>
</dbReference>
<dbReference type="GO" id="GO:0019843">
    <property type="term" value="F:rRNA binding"/>
    <property type="evidence" value="ECO:0007669"/>
    <property type="project" value="UniProtKB-KW"/>
</dbReference>
<dbReference type="GO" id="GO:0003735">
    <property type="term" value="F:structural constituent of ribosome"/>
    <property type="evidence" value="ECO:0007669"/>
    <property type="project" value="InterPro"/>
</dbReference>
<dbReference type="GO" id="GO:0006412">
    <property type="term" value="P:translation"/>
    <property type="evidence" value="ECO:0007669"/>
    <property type="project" value="UniProtKB-UniRule"/>
</dbReference>
<dbReference type="Gene3D" id="4.10.830.30">
    <property type="entry name" value="Ribosomal protein L31"/>
    <property type="match status" value="1"/>
</dbReference>
<dbReference type="HAMAP" id="MF_00501">
    <property type="entry name" value="Ribosomal_bL31_1"/>
    <property type="match status" value="1"/>
</dbReference>
<dbReference type="InterPro" id="IPR034704">
    <property type="entry name" value="Ribosomal_bL28/bL31-like_sf"/>
</dbReference>
<dbReference type="InterPro" id="IPR002150">
    <property type="entry name" value="Ribosomal_bL31"/>
</dbReference>
<dbReference type="InterPro" id="IPR027491">
    <property type="entry name" value="Ribosomal_bL31_A"/>
</dbReference>
<dbReference type="InterPro" id="IPR042105">
    <property type="entry name" value="Ribosomal_bL31_sf"/>
</dbReference>
<dbReference type="NCBIfam" id="TIGR00105">
    <property type="entry name" value="L31"/>
    <property type="match status" value="1"/>
</dbReference>
<dbReference type="NCBIfam" id="NF000612">
    <property type="entry name" value="PRK00019.1"/>
    <property type="match status" value="1"/>
</dbReference>
<dbReference type="PANTHER" id="PTHR33280">
    <property type="entry name" value="50S RIBOSOMAL PROTEIN L31, CHLOROPLASTIC"/>
    <property type="match status" value="1"/>
</dbReference>
<dbReference type="PANTHER" id="PTHR33280:SF6">
    <property type="entry name" value="LARGE RIBOSOMAL SUBUNIT PROTEIN BL31A"/>
    <property type="match status" value="1"/>
</dbReference>
<dbReference type="Pfam" id="PF01197">
    <property type="entry name" value="Ribosomal_L31"/>
    <property type="match status" value="1"/>
</dbReference>
<dbReference type="PRINTS" id="PR01249">
    <property type="entry name" value="RIBOSOMALL31"/>
</dbReference>
<dbReference type="SUPFAM" id="SSF143800">
    <property type="entry name" value="L28p-like"/>
    <property type="match status" value="1"/>
</dbReference>
<dbReference type="PROSITE" id="PS01143">
    <property type="entry name" value="RIBOSOMAL_L31"/>
    <property type="match status" value="1"/>
</dbReference>
<name>RL31_ANADE</name>
<comment type="function">
    <text evidence="1">Binds the 23S rRNA.</text>
</comment>
<comment type="cofactor">
    <cofactor evidence="1">
        <name>Zn(2+)</name>
        <dbReference type="ChEBI" id="CHEBI:29105"/>
    </cofactor>
    <text evidence="1">Binds 1 zinc ion per subunit.</text>
</comment>
<comment type="subunit">
    <text evidence="1">Part of the 50S ribosomal subunit.</text>
</comment>
<comment type="similarity">
    <text evidence="1">Belongs to the bacterial ribosomal protein bL31 family. Type A subfamily.</text>
</comment>
<proteinExistence type="inferred from homology"/>
<organism>
    <name type="scientific">Anaeromyxobacter dehalogenans (strain 2CP-C)</name>
    <dbReference type="NCBI Taxonomy" id="290397"/>
    <lineage>
        <taxon>Bacteria</taxon>
        <taxon>Pseudomonadati</taxon>
        <taxon>Myxococcota</taxon>
        <taxon>Myxococcia</taxon>
        <taxon>Myxococcales</taxon>
        <taxon>Cystobacterineae</taxon>
        <taxon>Anaeromyxobacteraceae</taxon>
        <taxon>Anaeromyxobacter</taxon>
    </lineage>
</organism>
<accession>Q2INT4</accession>
<protein>
    <recommendedName>
        <fullName evidence="1">Large ribosomal subunit protein bL31</fullName>
    </recommendedName>
    <alternativeName>
        <fullName>50S ribosomal protein L31</fullName>
    </alternativeName>
</protein>
<evidence type="ECO:0000255" key="1">
    <source>
        <dbReference type="HAMAP-Rule" id="MF_00501"/>
    </source>
</evidence>
<evidence type="ECO:0000256" key="2">
    <source>
        <dbReference type="SAM" id="MobiDB-lite"/>
    </source>
</evidence>
<keyword id="KW-0479">Metal-binding</keyword>
<keyword id="KW-1185">Reference proteome</keyword>
<keyword id="KW-0687">Ribonucleoprotein</keyword>
<keyword id="KW-0689">Ribosomal protein</keyword>
<keyword id="KW-0694">RNA-binding</keyword>
<keyword id="KW-0699">rRNA-binding</keyword>
<keyword id="KW-0862">Zinc</keyword>
<feature type="chain" id="PRO_0000259167" description="Large ribosomal subunit protein bL31">
    <location>
        <begin position="1"/>
        <end position="121"/>
    </location>
</feature>
<feature type="region of interest" description="Large ribosomal subunit protein bL31" evidence="1">
    <location>
        <begin position="1"/>
        <end position="97"/>
    </location>
</feature>
<feature type="region of interest" description="Disordered" evidence="2">
    <location>
        <begin position="65"/>
        <end position="121"/>
    </location>
</feature>
<feature type="region of interest" description="Unknown">
    <location>
        <begin position="74"/>
        <end position="121"/>
    </location>
</feature>
<feature type="compositionally biased region" description="Low complexity" evidence="2">
    <location>
        <begin position="65"/>
        <end position="80"/>
    </location>
</feature>
<feature type="compositionally biased region" description="Basic and acidic residues" evidence="2">
    <location>
        <begin position="81"/>
        <end position="93"/>
    </location>
</feature>
<feature type="compositionally biased region" description="Low complexity" evidence="2">
    <location>
        <begin position="107"/>
        <end position="121"/>
    </location>
</feature>
<feature type="binding site" evidence="1">
    <location>
        <position position="16"/>
    </location>
    <ligand>
        <name>Zn(2+)</name>
        <dbReference type="ChEBI" id="CHEBI:29105"/>
    </ligand>
</feature>
<feature type="binding site" evidence="1">
    <location>
        <position position="18"/>
    </location>
    <ligand>
        <name>Zn(2+)</name>
        <dbReference type="ChEBI" id="CHEBI:29105"/>
    </ligand>
</feature>
<feature type="binding site" evidence="1">
    <location>
        <position position="36"/>
    </location>
    <ligand>
        <name>Zn(2+)</name>
        <dbReference type="ChEBI" id="CHEBI:29105"/>
    </ligand>
</feature>
<feature type="binding site" evidence="1">
    <location>
        <position position="39"/>
    </location>
    <ligand>
        <name>Zn(2+)</name>
        <dbReference type="ChEBI" id="CHEBI:29105"/>
    </ligand>
</feature>